<accession>Q8EX21</accession>
<name>RS12_MALP2</name>
<sequence length="140" mass="15975">MATIAQLIRHDRKDKFKKSKSPALMYTYNSLKKKRTYNPSPYKRGVCTRVGTMTPKKPNSALRKYAKVKLTNGYEVLAYIPGEGHNLQEHSVVLIEGGRVKDLPGVRYHIVRGTLDTSGVEKRRQQRSGYGAKRPKEKKE</sequence>
<feature type="chain" id="PRO_0000146267" description="Small ribosomal subunit protein uS12">
    <location>
        <begin position="1"/>
        <end position="140"/>
    </location>
</feature>
<feature type="region of interest" description="Disordered" evidence="2">
    <location>
        <begin position="36"/>
        <end position="56"/>
    </location>
</feature>
<feature type="region of interest" description="Disordered" evidence="2">
    <location>
        <begin position="117"/>
        <end position="140"/>
    </location>
</feature>
<keyword id="KW-1185">Reference proteome</keyword>
<keyword id="KW-0687">Ribonucleoprotein</keyword>
<keyword id="KW-0689">Ribosomal protein</keyword>
<keyword id="KW-0694">RNA-binding</keyword>
<keyword id="KW-0699">rRNA-binding</keyword>
<keyword id="KW-0820">tRNA-binding</keyword>
<evidence type="ECO:0000255" key="1">
    <source>
        <dbReference type="HAMAP-Rule" id="MF_00403"/>
    </source>
</evidence>
<evidence type="ECO:0000256" key="2">
    <source>
        <dbReference type="SAM" id="MobiDB-lite"/>
    </source>
</evidence>
<evidence type="ECO:0000305" key="3"/>
<proteinExistence type="inferred from homology"/>
<reference key="1">
    <citation type="journal article" date="2002" name="Nucleic Acids Res.">
        <title>The complete genomic sequence of Mycoplasma penetrans, an intracellular bacterial pathogen in humans.</title>
        <authorList>
            <person name="Sasaki Y."/>
            <person name="Ishikawa J."/>
            <person name="Yamashita A."/>
            <person name="Oshima K."/>
            <person name="Kenri T."/>
            <person name="Furuya K."/>
            <person name="Yoshino C."/>
            <person name="Horino A."/>
            <person name="Shiba T."/>
            <person name="Sasaki T."/>
            <person name="Hattori M."/>
        </authorList>
    </citation>
    <scope>NUCLEOTIDE SEQUENCE [LARGE SCALE GENOMIC DNA]</scope>
    <source>
        <strain>HF-2</strain>
    </source>
</reference>
<organism>
    <name type="scientific">Malacoplasma penetrans (strain HF-2)</name>
    <name type="common">Mycoplasma penetrans</name>
    <dbReference type="NCBI Taxonomy" id="272633"/>
    <lineage>
        <taxon>Bacteria</taxon>
        <taxon>Bacillati</taxon>
        <taxon>Mycoplasmatota</taxon>
        <taxon>Mycoplasmoidales</taxon>
        <taxon>Mycoplasmoidaceae</taxon>
        <taxon>Malacoplasma</taxon>
    </lineage>
</organism>
<comment type="function">
    <text evidence="1">With S4 and S5 plays an important role in translational accuracy.</text>
</comment>
<comment type="function">
    <text evidence="1">Interacts with and stabilizes bases of the 16S rRNA that are involved in tRNA selection in the A site and with the mRNA backbone. Located at the interface of the 30S and 50S subunits, it traverses the body of the 30S subunit contacting proteins on the other side and probably holding the rRNA structure together. The combined cluster of proteins S8, S12 and S17 appears to hold together the shoulder and platform of the 30S subunit.</text>
</comment>
<comment type="subunit">
    <text evidence="1">Part of the 30S ribosomal subunit. Contacts proteins S8 and S17. May interact with IF1 in the 30S initiation complex.</text>
</comment>
<comment type="similarity">
    <text evidence="1">Belongs to the universal ribosomal protein uS12 family.</text>
</comment>
<comment type="caution">
    <text evidence="3">Because the enzyme that would modify Asp-102 to 3-methylthioaspartic acid has not been found in the proteome of this organism, that modification is not predicted.</text>
</comment>
<dbReference type="EMBL" id="BA000026">
    <property type="protein sequence ID" value="BAC43819.1"/>
    <property type="molecule type" value="Genomic_DNA"/>
</dbReference>
<dbReference type="RefSeq" id="WP_011076855.1">
    <property type="nucleotide sequence ID" value="NC_004432.1"/>
</dbReference>
<dbReference type="SMR" id="Q8EX21"/>
<dbReference type="FunCoup" id="Q8EX21">
    <property type="interactions" value="240"/>
</dbReference>
<dbReference type="STRING" id="272633.gene:10731120"/>
<dbReference type="KEGG" id="mpe:MYPE290"/>
<dbReference type="eggNOG" id="COG0048">
    <property type="taxonomic scope" value="Bacteria"/>
</dbReference>
<dbReference type="HOGENOM" id="CLU_104295_1_2_14"/>
<dbReference type="InParanoid" id="Q8EX21"/>
<dbReference type="Proteomes" id="UP000002522">
    <property type="component" value="Chromosome"/>
</dbReference>
<dbReference type="GO" id="GO:0015935">
    <property type="term" value="C:small ribosomal subunit"/>
    <property type="evidence" value="ECO:0007669"/>
    <property type="project" value="InterPro"/>
</dbReference>
<dbReference type="GO" id="GO:0019843">
    <property type="term" value="F:rRNA binding"/>
    <property type="evidence" value="ECO:0007669"/>
    <property type="project" value="UniProtKB-UniRule"/>
</dbReference>
<dbReference type="GO" id="GO:0003735">
    <property type="term" value="F:structural constituent of ribosome"/>
    <property type="evidence" value="ECO:0007669"/>
    <property type="project" value="InterPro"/>
</dbReference>
<dbReference type="GO" id="GO:0000049">
    <property type="term" value="F:tRNA binding"/>
    <property type="evidence" value="ECO:0007669"/>
    <property type="project" value="UniProtKB-UniRule"/>
</dbReference>
<dbReference type="GO" id="GO:0006412">
    <property type="term" value="P:translation"/>
    <property type="evidence" value="ECO:0007669"/>
    <property type="project" value="UniProtKB-UniRule"/>
</dbReference>
<dbReference type="CDD" id="cd03368">
    <property type="entry name" value="Ribosomal_S12"/>
    <property type="match status" value="1"/>
</dbReference>
<dbReference type="FunFam" id="2.40.50.140:FF:000001">
    <property type="entry name" value="30S ribosomal protein S12"/>
    <property type="match status" value="1"/>
</dbReference>
<dbReference type="Gene3D" id="2.40.50.140">
    <property type="entry name" value="Nucleic acid-binding proteins"/>
    <property type="match status" value="1"/>
</dbReference>
<dbReference type="HAMAP" id="MF_00403_B">
    <property type="entry name" value="Ribosomal_uS12_B"/>
    <property type="match status" value="1"/>
</dbReference>
<dbReference type="InterPro" id="IPR012340">
    <property type="entry name" value="NA-bd_OB-fold"/>
</dbReference>
<dbReference type="InterPro" id="IPR006032">
    <property type="entry name" value="Ribosomal_uS12"/>
</dbReference>
<dbReference type="InterPro" id="IPR005679">
    <property type="entry name" value="Ribosomal_uS12_bac"/>
</dbReference>
<dbReference type="NCBIfam" id="TIGR00981">
    <property type="entry name" value="rpsL_bact"/>
    <property type="match status" value="1"/>
</dbReference>
<dbReference type="PANTHER" id="PTHR11652">
    <property type="entry name" value="30S RIBOSOMAL PROTEIN S12 FAMILY MEMBER"/>
    <property type="match status" value="1"/>
</dbReference>
<dbReference type="Pfam" id="PF00164">
    <property type="entry name" value="Ribosom_S12_S23"/>
    <property type="match status" value="1"/>
</dbReference>
<dbReference type="PRINTS" id="PR01034">
    <property type="entry name" value="RIBOSOMALS12"/>
</dbReference>
<dbReference type="SUPFAM" id="SSF50249">
    <property type="entry name" value="Nucleic acid-binding proteins"/>
    <property type="match status" value="1"/>
</dbReference>
<dbReference type="PROSITE" id="PS00055">
    <property type="entry name" value="RIBOSOMAL_S12"/>
    <property type="match status" value="1"/>
</dbReference>
<gene>
    <name evidence="1" type="primary">rpsL</name>
    <name type="ordered locus">MYPE290</name>
</gene>
<protein>
    <recommendedName>
        <fullName evidence="1">Small ribosomal subunit protein uS12</fullName>
    </recommendedName>
    <alternativeName>
        <fullName evidence="3">30S ribosomal protein S12</fullName>
    </alternativeName>
</protein>